<dbReference type="EC" id="6.1.1.4" evidence="1"/>
<dbReference type="EMBL" id="CP001661">
    <property type="protein sequence ID" value="ACT16840.1"/>
    <property type="molecule type" value="Genomic_DNA"/>
</dbReference>
<dbReference type="SMR" id="C6E100"/>
<dbReference type="STRING" id="443144.GM21_0766"/>
<dbReference type="KEGG" id="gem:GM21_0766"/>
<dbReference type="eggNOG" id="COG0495">
    <property type="taxonomic scope" value="Bacteria"/>
</dbReference>
<dbReference type="HOGENOM" id="CLU_004427_0_0_7"/>
<dbReference type="OrthoDB" id="9810365at2"/>
<dbReference type="GO" id="GO:0005829">
    <property type="term" value="C:cytosol"/>
    <property type="evidence" value="ECO:0007669"/>
    <property type="project" value="TreeGrafter"/>
</dbReference>
<dbReference type="GO" id="GO:0002161">
    <property type="term" value="F:aminoacyl-tRNA deacylase activity"/>
    <property type="evidence" value="ECO:0007669"/>
    <property type="project" value="InterPro"/>
</dbReference>
<dbReference type="GO" id="GO:0005524">
    <property type="term" value="F:ATP binding"/>
    <property type="evidence" value="ECO:0007669"/>
    <property type="project" value="UniProtKB-UniRule"/>
</dbReference>
<dbReference type="GO" id="GO:0004823">
    <property type="term" value="F:leucine-tRNA ligase activity"/>
    <property type="evidence" value="ECO:0007669"/>
    <property type="project" value="UniProtKB-UniRule"/>
</dbReference>
<dbReference type="GO" id="GO:0006429">
    <property type="term" value="P:leucyl-tRNA aminoacylation"/>
    <property type="evidence" value="ECO:0007669"/>
    <property type="project" value="UniProtKB-UniRule"/>
</dbReference>
<dbReference type="CDD" id="cd07958">
    <property type="entry name" value="Anticodon_Ia_Leu_BEm"/>
    <property type="match status" value="1"/>
</dbReference>
<dbReference type="CDD" id="cd00812">
    <property type="entry name" value="LeuRS_core"/>
    <property type="match status" value="1"/>
</dbReference>
<dbReference type="FunFam" id="3.10.20.590:FF:000001">
    <property type="entry name" value="Leucine--tRNA ligase"/>
    <property type="match status" value="1"/>
</dbReference>
<dbReference type="FunFam" id="3.40.50.620:FF:000003">
    <property type="entry name" value="Leucine--tRNA ligase"/>
    <property type="match status" value="1"/>
</dbReference>
<dbReference type="FunFam" id="3.40.50.620:FF:000212">
    <property type="entry name" value="Leucine--tRNA ligase"/>
    <property type="match status" value="1"/>
</dbReference>
<dbReference type="FunFam" id="1.10.730.10:FF:000011">
    <property type="entry name" value="Leucine--tRNA ligase chloroplastic/mitochondrial"/>
    <property type="match status" value="1"/>
</dbReference>
<dbReference type="Gene3D" id="3.10.20.590">
    <property type="match status" value="1"/>
</dbReference>
<dbReference type="Gene3D" id="3.40.50.620">
    <property type="entry name" value="HUPs"/>
    <property type="match status" value="2"/>
</dbReference>
<dbReference type="Gene3D" id="1.10.730.10">
    <property type="entry name" value="Isoleucyl-tRNA Synthetase, Domain 1"/>
    <property type="match status" value="1"/>
</dbReference>
<dbReference type="HAMAP" id="MF_00049_B">
    <property type="entry name" value="Leu_tRNA_synth_B"/>
    <property type="match status" value="1"/>
</dbReference>
<dbReference type="InterPro" id="IPR001412">
    <property type="entry name" value="aa-tRNA-synth_I_CS"/>
</dbReference>
<dbReference type="InterPro" id="IPR002300">
    <property type="entry name" value="aa-tRNA-synth_Ia"/>
</dbReference>
<dbReference type="InterPro" id="IPR002302">
    <property type="entry name" value="Leu-tRNA-ligase"/>
</dbReference>
<dbReference type="InterPro" id="IPR025709">
    <property type="entry name" value="Leu_tRNA-synth_edit"/>
</dbReference>
<dbReference type="InterPro" id="IPR013155">
    <property type="entry name" value="M/V/L/I-tRNA-synth_anticd-bd"/>
</dbReference>
<dbReference type="InterPro" id="IPR015413">
    <property type="entry name" value="Methionyl/Leucyl_tRNA_Synth"/>
</dbReference>
<dbReference type="InterPro" id="IPR014729">
    <property type="entry name" value="Rossmann-like_a/b/a_fold"/>
</dbReference>
<dbReference type="InterPro" id="IPR009080">
    <property type="entry name" value="tRNAsynth_Ia_anticodon-bd"/>
</dbReference>
<dbReference type="InterPro" id="IPR009008">
    <property type="entry name" value="Val/Leu/Ile-tRNA-synth_edit"/>
</dbReference>
<dbReference type="NCBIfam" id="TIGR00396">
    <property type="entry name" value="leuS_bact"/>
    <property type="match status" value="1"/>
</dbReference>
<dbReference type="PANTHER" id="PTHR43740:SF2">
    <property type="entry name" value="LEUCINE--TRNA LIGASE, MITOCHONDRIAL"/>
    <property type="match status" value="1"/>
</dbReference>
<dbReference type="PANTHER" id="PTHR43740">
    <property type="entry name" value="LEUCYL-TRNA SYNTHETASE"/>
    <property type="match status" value="1"/>
</dbReference>
<dbReference type="Pfam" id="PF08264">
    <property type="entry name" value="Anticodon_1"/>
    <property type="match status" value="1"/>
</dbReference>
<dbReference type="Pfam" id="PF00133">
    <property type="entry name" value="tRNA-synt_1"/>
    <property type="match status" value="1"/>
</dbReference>
<dbReference type="Pfam" id="PF13603">
    <property type="entry name" value="tRNA-synt_1_2"/>
    <property type="match status" value="1"/>
</dbReference>
<dbReference type="Pfam" id="PF09334">
    <property type="entry name" value="tRNA-synt_1g"/>
    <property type="match status" value="1"/>
</dbReference>
<dbReference type="PRINTS" id="PR00985">
    <property type="entry name" value="TRNASYNTHLEU"/>
</dbReference>
<dbReference type="SUPFAM" id="SSF47323">
    <property type="entry name" value="Anticodon-binding domain of a subclass of class I aminoacyl-tRNA synthetases"/>
    <property type="match status" value="1"/>
</dbReference>
<dbReference type="SUPFAM" id="SSF52374">
    <property type="entry name" value="Nucleotidylyl transferase"/>
    <property type="match status" value="1"/>
</dbReference>
<dbReference type="SUPFAM" id="SSF50677">
    <property type="entry name" value="ValRS/IleRS/LeuRS editing domain"/>
    <property type="match status" value="1"/>
</dbReference>
<dbReference type="PROSITE" id="PS00178">
    <property type="entry name" value="AA_TRNA_LIGASE_I"/>
    <property type="match status" value="1"/>
</dbReference>
<organism>
    <name type="scientific">Geobacter sp. (strain M21)</name>
    <dbReference type="NCBI Taxonomy" id="443144"/>
    <lineage>
        <taxon>Bacteria</taxon>
        <taxon>Pseudomonadati</taxon>
        <taxon>Thermodesulfobacteriota</taxon>
        <taxon>Desulfuromonadia</taxon>
        <taxon>Geobacterales</taxon>
        <taxon>Geobacteraceae</taxon>
        <taxon>Geobacter</taxon>
    </lineage>
</organism>
<gene>
    <name evidence="1" type="primary">leuS</name>
    <name type="ordered locus">GM21_0766</name>
</gene>
<reference key="1">
    <citation type="submission" date="2009-07" db="EMBL/GenBank/DDBJ databases">
        <title>Complete sequence of Geobacter sp. M21.</title>
        <authorList>
            <consortium name="US DOE Joint Genome Institute"/>
            <person name="Lucas S."/>
            <person name="Copeland A."/>
            <person name="Lapidus A."/>
            <person name="Glavina del Rio T."/>
            <person name="Dalin E."/>
            <person name="Tice H."/>
            <person name="Bruce D."/>
            <person name="Goodwin L."/>
            <person name="Pitluck S."/>
            <person name="Saunders E."/>
            <person name="Brettin T."/>
            <person name="Detter J.C."/>
            <person name="Han C."/>
            <person name="Larimer F."/>
            <person name="Land M."/>
            <person name="Hauser L."/>
            <person name="Kyrpides N."/>
            <person name="Ovchinnikova G."/>
            <person name="Lovley D."/>
        </authorList>
    </citation>
    <scope>NUCLEOTIDE SEQUENCE [LARGE SCALE GENOMIC DNA]</scope>
    <source>
        <strain>M21</strain>
    </source>
</reference>
<name>SYL_GEOSM</name>
<sequence>MEEKYNPSAVEEKWQGYWAEHESFKATEDPTRKKYYLLEMFPYPSGKIHMGHVRNYSIGDVIARFKRMQGYNVLHPMGWDAFGMPAENAAIQHKSHPAKWTYENIAYMRGQLKTLGLSYDWDRELATCDLDYYKWEQRIFLEMYKKGLAYKKSSAVNWCPKCETVLANEQVEDGCCWRCDSPVRQKELEQWSFRITNYAQELLDDTYKLTGWPERVLTMQRNWIGRSTGCEIDFPLENGLGKIKVFTTRQDTLFGATFMSLAAEHPMALDLAGDAQRAQVEAFIDKVKKTDRIKRGAEDLEKEGVFTGSYCVNPVTNTKMPIYLANFVLMDYGTGAVMAVPTHDQRDFEFAKKYNLPLKVVIQPEGETLDPAAMTEAYTAEGIMANSGRFDGMGNGDAKEAIADFLEKEGIGKKTVNFRLRDWGISRQRYWGNPIPVINCDLCGVVAVPEADLPVVLPMDAEFTGEGGNPLARVDSFTTCTCPQCGEAARRETDTMDTFVQSSWYFLRYCSPKFSAGPLDREKVEAWMPVDQYIGGIEHAVLHLLYARFFTKVLRDLGYCNVDEPFSNLLTQGMVIKDGAKMSKSKGNVVDPNALIERYGADTARLFSLFAAPPEKDLDWSDQGVDGSYRFLNRVWRLVYDVLPVIGEAGAVNPDSLGAEAKKLRRAVHKTIKKVSEDVEERFHFNTAIAAVMELVNAIQAFAAKDAPENVAVVREAVESVVRLLAPFVPHFAEELWSQLGHDTVLEAAGWPGYDAAAVVDEEVTVVIQVNGKLRSKLTVAPDAKEEEVRAQALADDKIKPYLEGKDVKKVVYVPGKLVSIVVA</sequence>
<accession>C6E100</accession>
<evidence type="ECO:0000255" key="1">
    <source>
        <dbReference type="HAMAP-Rule" id="MF_00049"/>
    </source>
</evidence>
<feature type="chain" id="PRO_1000202220" description="Leucine--tRNA ligase">
    <location>
        <begin position="1"/>
        <end position="824"/>
    </location>
</feature>
<feature type="short sequence motif" description="'HIGH' region">
    <location>
        <begin position="42"/>
        <end position="52"/>
    </location>
</feature>
<feature type="short sequence motif" description="'KMSKS' region">
    <location>
        <begin position="581"/>
        <end position="585"/>
    </location>
</feature>
<feature type="binding site" evidence="1">
    <location>
        <position position="584"/>
    </location>
    <ligand>
        <name>ATP</name>
        <dbReference type="ChEBI" id="CHEBI:30616"/>
    </ligand>
</feature>
<comment type="catalytic activity">
    <reaction evidence="1">
        <text>tRNA(Leu) + L-leucine + ATP = L-leucyl-tRNA(Leu) + AMP + diphosphate</text>
        <dbReference type="Rhea" id="RHEA:11688"/>
        <dbReference type="Rhea" id="RHEA-COMP:9613"/>
        <dbReference type="Rhea" id="RHEA-COMP:9622"/>
        <dbReference type="ChEBI" id="CHEBI:30616"/>
        <dbReference type="ChEBI" id="CHEBI:33019"/>
        <dbReference type="ChEBI" id="CHEBI:57427"/>
        <dbReference type="ChEBI" id="CHEBI:78442"/>
        <dbReference type="ChEBI" id="CHEBI:78494"/>
        <dbReference type="ChEBI" id="CHEBI:456215"/>
        <dbReference type="EC" id="6.1.1.4"/>
    </reaction>
</comment>
<comment type="subcellular location">
    <subcellularLocation>
        <location evidence="1">Cytoplasm</location>
    </subcellularLocation>
</comment>
<comment type="similarity">
    <text evidence="1">Belongs to the class-I aminoacyl-tRNA synthetase family.</text>
</comment>
<proteinExistence type="inferred from homology"/>
<protein>
    <recommendedName>
        <fullName evidence="1">Leucine--tRNA ligase</fullName>
        <ecNumber evidence="1">6.1.1.4</ecNumber>
    </recommendedName>
    <alternativeName>
        <fullName evidence="1">Leucyl-tRNA synthetase</fullName>
        <shortName evidence="1">LeuRS</shortName>
    </alternativeName>
</protein>
<keyword id="KW-0030">Aminoacyl-tRNA synthetase</keyword>
<keyword id="KW-0067">ATP-binding</keyword>
<keyword id="KW-0963">Cytoplasm</keyword>
<keyword id="KW-0436">Ligase</keyword>
<keyword id="KW-0547">Nucleotide-binding</keyword>
<keyword id="KW-0648">Protein biosynthesis</keyword>